<feature type="chain" id="PRO_0000291137" description="UPF0434 protein PSPPH_1629">
    <location>
        <begin position="1"/>
        <end position="61"/>
    </location>
</feature>
<gene>
    <name type="ordered locus">PSPPH_1629</name>
</gene>
<sequence length="61" mass="6602">MDTKLLDILACPVCKGPLKLSADKTELISKGAGLAYPVRDGIPVMLESEARTLSTDERLEK</sequence>
<protein>
    <recommendedName>
        <fullName evidence="1">UPF0434 protein PSPPH_1629</fullName>
    </recommendedName>
</protein>
<dbReference type="EMBL" id="CP000058">
    <property type="protein sequence ID" value="AAZ37572.1"/>
    <property type="status" value="ALT_INIT"/>
    <property type="molecule type" value="Genomic_DNA"/>
</dbReference>
<dbReference type="RefSeq" id="WP_002552679.1">
    <property type="nucleotide sequence ID" value="NC_005773.3"/>
</dbReference>
<dbReference type="SMR" id="Q48L53"/>
<dbReference type="KEGG" id="psp:PSPPH_1629"/>
<dbReference type="eggNOG" id="COG2835">
    <property type="taxonomic scope" value="Bacteria"/>
</dbReference>
<dbReference type="HOGENOM" id="CLU_155659_3_1_6"/>
<dbReference type="Proteomes" id="UP000000551">
    <property type="component" value="Chromosome"/>
</dbReference>
<dbReference type="GO" id="GO:0005829">
    <property type="term" value="C:cytosol"/>
    <property type="evidence" value="ECO:0007669"/>
    <property type="project" value="TreeGrafter"/>
</dbReference>
<dbReference type="FunFam" id="2.20.25.10:FF:000002">
    <property type="entry name" value="UPF0434 protein YcaR"/>
    <property type="match status" value="1"/>
</dbReference>
<dbReference type="Gene3D" id="2.20.25.10">
    <property type="match status" value="1"/>
</dbReference>
<dbReference type="HAMAP" id="MF_01187">
    <property type="entry name" value="UPF0434"/>
    <property type="match status" value="1"/>
</dbReference>
<dbReference type="InterPro" id="IPR005651">
    <property type="entry name" value="Trm112-like"/>
</dbReference>
<dbReference type="PANTHER" id="PTHR33505:SF4">
    <property type="entry name" value="PROTEIN PREY, MITOCHONDRIAL"/>
    <property type="match status" value="1"/>
</dbReference>
<dbReference type="PANTHER" id="PTHR33505">
    <property type="entry name" value="ZGC:162634"/>
    <property type="match status" value="1"/>
</dbReference>
<dbReference type="Pfam" id="PF03966">
    <property type="entry name" value="Trm112p"/>
    <property type="match status" value="1"/>
</dbReference>
<dbReference type="SUPFAM" id="SSF158997">
    <property type="entry name" value="Trm112p-like"/>
    <property type="match status" value="1"/>
</dbReference>
<evidence type="ECO:0000255" key="1">
    <source>
        <dbReference type="HAMAP-Rule" id="MF_01187"/>
    </source>
</evidence>
<evidence type="ECO:0000305" key="2"/>
<proteinExistence type="inferred from homology"/>
<comment type="similarity">
    <text evidence="1">Belongs to the UPF0434 family.</text>
</comment>
<comment type="sequence caution" evidence="2">
    <conflict type="erroneous initiation">
        <sequence resource="EMBL-CDS" id="AAZ37572"/>
    </conflict>
</comment>
<accession>Q48L53</accession>
<reference key="1">
    <citation type="journal article" date="2005" name="J. Bacteriol.">
        <title>Whole-genome sequence analysis of Pseudomonas syringae pv. phaseolicola 1448A reveals divergence among pathovars in genes involved in virulence and transposition.</title>
        <authorList>
            <person name="Joardar V."/>
            <person name="Lindeberg M."/>
            <person name="Jackson R.W."/>
            <person name="Selengut J."/>
            <person name="Dodson R."/>
            <person name="Brinkac L.M."/>
            <person name="Daugherty S.C."/>
            <person name="DeBoy R.T."/>
            <person name="Durkin A.S."/>
            <person name="Gwinn Giglio M."/>
            <person name="Madupu R."/>
            <person name="Nelson W.C."/>
            <person name="Rosovitz M.J."/>
            <person name="Sullivan S.A."/>
            <person name="Crabtree J."/>
            <person name="Creasy T."/>
            <person name="Davidsen T.M."/>
            <person name="Haft D.H."/>
            <person name="Zafar N."/>
            <person name="Zhou L."/>
            <person name="Halpin R."/>
            <person name="Holley T."/>
            <person name="Khouri H.M."/>
            <person name="Feldblyum T.V."/>
            <person name="White O."/>
            <person name="Fraser C.M."/>
            <person name="Chatterjee A.K."/>
            <person name="Cartinhour S."/>
            <person name="Schneider D."/>
            <person name="Mansfield J.W."/>
            <person name="Collmer A."/>
            <person name="Buell R."/>
        </authorList>
    </citation>
    <scope>NUCLEOTIDE SEQUENCE [LARGE SCALE GENOMIC DNA]</scope>
    <source>
        <strain>1448A / Race 6</strain>
    </source>
</reference>
<name>Y1629_PSE14</name>
<organism>
    <name type="scientific">Pseudomonas savastanoi pv. phaseolicola (strain 1448A / Race 6)</name>
    <name type="common">Pseudomonas syringae pv. phaseolicola (strain 1448A / Race 6)</name>
    <dbReference type="NCBI Taxonomy" id="264730"/>
    <lineage>
        <taxon>Bacteria</taxon>
        <taxon>Pseudomonadati</taxon>
        <taxon>Pseudomonadota</taxon>
        <taxon>Gammaproteobacteria</taxon>
        <taxon>Pseudomonadales</taxon>
        <taxon>Pseudomonadaceae</taxon>
        <taxon>Pseudomonas</taxon>
    </lineage>
</organism>